<keyword id="KW-1003">Cell membrane</keyword>
<keyword id="KW-0472">Membrane</keyword>
<keyword id="KW-1185">Reference proteome</keyword>
<keyword id="KW-0677">Repeat</keyword>
<keyword id="KW-0762">Sugar transport</keyword>
<keyword id="KW-0812">Transmembrane</keyword>
<keyword id="KW-1133">Transmembrane helix</keyword>
<keyword id="KW-0813">Transport</keyword>
<reference key="1">
    <citation type="journal article" date="2005" name="BMC Biol.">
        <title>The sequence of rice chromosomes 11 and 12, rich in disease resistance genes and recent gene duplications.</title>
        <authorList>
            <consortium name="The rice chromosomes 11 and 12 sequencing consortia"/>
        </authorList>
    </citation>
    <scope>NUCLEOTIDE SEQUENCE [LARGE SCALE GENOMIC DNA]</scope>
    <source>
        <strain>cv. Nipponbare</strain>
    </source>
</reference>
<reference key="2">
    <citation type="journal article" date="2005" name="Nature">
        <title>The map-based sequence of the rice genome.</title>
        <authorList>
            <consortium name="International rice genome sequencing project (IRGSP)"/>
        </authorList>
    </citation>
    <scope>NUCLEOTIDE SEQUENCE [LARGE SCALE GENOMIC DNA]</scope>
    <source>
        <strain>cv. Nipponbare</strain>
    </source>
</reference>
<reference key="3">
    <citation type="journal article" date="2008" name="Nucleic Acids Res.">
        <title>The rice annotation project database (RAP-DB): 2008 update.</title>
        <authorList>
            <consortium name="The rice annotation project (RAP)"/>
        </authorList>
    </citation>
    <scope>GENOME REANNOTATION</scope>
    <source>
        <strain>cv. Nipponbare</strain>
    </source>
</reference>
<reference key="4">
    <citation type="journal article" date="2013" name="Rice">
        <title>Improvement of the Oryza sativa Nipponbare reference genome using next generation sequence and optical map data.</title>
        <authorList>
            <person name="Kawahara Y."/>
            <person name="de la Bastide M."/>
            <person name="Hamilton J.P."/>
            <person name="Kanamori H."/>
            <person name="McCombie W.R."/>
            <person name="Ouyang S."/>
            <person name="Schwartz D.C."/>
            <person name="Tanaka T."/>
            <person name="Wu J."/>
            <person name="Zhou S."/>
            <person name="Childs K.L."/>
            <person name="Davidson R.M."/>
            <person name="Lin H."/>
            <person name="Quesada-Ocampo L."/>
            <person name="Vaillancourt B."/>
            <person name="Sakai H."/>
            <person name="Lee S.S."/>
            <person name="Kim J."/>
            <person name="Numa H."/>
            <person name="Itoh T."/>
            <person name="Buell C.R."/>
            <person name="Matsumoto T."/>
        </authorList>
    </citation>
    <scope>GENOME REANNOTATION</scope>
    <source>
        <strain>cv. Nipponbare</strain>
    </source>
</reference>
<reference key="5">
    <citation type="journal article" date="2005" name="PLoS Biol.">
        <title>The genomes of Oryza sativa: a history of duplications.</title>
        <authorList>
            <person name="Yu J."/>
            <person name="Wang J."/>
            <person name="Lin W."/>
            <person name="Li S."/>
            <person name="Li H."/>
            <person name="Zhou J."/>
            <person name="Ni P."/>
            <person name="Dong W."/>
            <person name="Hu S."/>
            <person name="Zeng C."/>
            <person name="Zhang J."/>
            <person name="Zhang Y."/>
            <person name="Li R."/>
            <person name="Xu Z."/>
            <person name="Li S."/>
            <person name="Li X."/>
            <person name="Zheng H."/>
            <person name="Cong L."/>
            <person name="Lin L."/>
            <person name="Yin J."/>
            <person name="Geng J."/>
            <person name="Li G."/>
            <person name="Shi J."/>
            <person name="Liu J."/>
            <person name="Lv H."/>
            <person name="Li J."/>
            <person name="Wang J."/>
            <person name="Deng Y."/>
            <person name="Ran L."/>
            <person name="Shi X."/>
            <person name="Wang X."/>
            <person name="Wu Q."/>
            <person name="Li C."/>
            <person name="Ren X."/>
            <person name="Wang J."/>
            <person name="Wang X."/>
            <person name="Li D."/>
            <person name="Liu D."/>
            <person name="Zhang X."/>
            <person name="Ji Z."/>
            <person name="Zhao W."/>
            <person name="Sun Y."/>
            <person name="Zhang Z."/>
            <person name="Bao J."/>
            <person name="Han Y."/>
            <person name="Dong L."/>
            <person name="Ji J."/>
            <person name="Chen P."/>
            <person name="Wu S."/>
            <person name="Liu J."/>
            <person name="Xiao Y."/>
            <person name="Bu D."/>
            <person name="Tan J."/>
            <person name="Yang L."/>
            <person name="Ye C."/>
            <person name="Zhang J."/>
            <person name="Xu J."/>
            <person name="Zhou Y."/>
            <person name="Yu Y."/>
            <person name="Zhang B."/>
            <person name="Zhuang S."/>
            <person name="Wei H."/>
            <person name="Liu B."/>
            <person name="Lei M."/>
            <person name="Yu H."/>
            <person name="Li Y."/>
            <person name="Xu H."/>
            <person name="Wei S."/>
            <person name="He X."/>
            <person name="Fang L."/>
            <person name="Zhang Z."/>
            <person name="Zhang Y."/>
            <person name="Huang X."/>
            <person name="Su Z."/>
            <person name="Tong W."/>
            <person name="Li J."/>
            <person name="Tong Z."/>
            <person name="Li S."/>
            <person name="Ye J."/>
            <person name="Wang L."/>
            <person name="Fang L."/>
            <person name="Lei T."/>
            <person name="Chen C.-S."/>
            <person name="Chen H.-C."/>
            <person name="Xu Z."/>
            <person name="Li H."/>
            <person name="Huang H."/>
            <person name="Zhang F."/>
            <person name="Xu H."/>
            <person name="Li N."/>
            <person name="Zhao C."/>
            <person name="Li S."/>
            <person name="Dong L."/>
            <person name="Huang Y."/>
            <person name="Li L."/>
            <person name="Xi Y."/>
            <person name="Qi Q."/>
            <person name="Li W."/>
            <person name="Zhang B."/>
            <person name="Hu W."/>
            <person name="Zhang Y."/>
            <person name="Tian X."/>
            <person name="Jiao Y."/>
            <person name="Liang X."/>
            <person name="Jin J."/>
            <person name="Gao L."/>
            <person name="Zheng W."/>
            <person name="Hao B."/>
            <person name="Liu S.-M."/>
            <person name="Wang W."/>
            <person name="Yuan L."/>
            <person name="Cao M."/>
            <person name="McDermott J."/>
            <person name="Samudrala R."/>
            <person name="Wang J."/>
            <person name="Wong G.K.-S."/>
            <person name="Yang H."/>
        </authorList>
    </citation>
    <scope>NUCLEOTIDE SEQUENCE [LARGE SCALE GENOMIC DNA]</scope>
    <source>
        <strain>cv. Nipponbare</strain>
    </source>
</reference>
<reference key="6">
    <citation type="journal article" date="2003" name="Science">
        <title>Collection, mapping, and annotation of over 28,000 cDNA clones from japonica rice.</title>
        <authorList>
            <consortium name="The rice full-length cDNA consortium"/>
        </authorList>
    </citation>
    <scope>NUCLEOTIDE SEQUENCE [LARGE SCALE MRNA]</scope>
    <source>
        <strain>cv. Nipponbare</strain>
    </source>
</reference>
<reference key="7">
    <citation type="journal article" date="2010" name="Nature">
        <title>Sugar transporters for intercellular exchange and nutrition of pathogens.</title>
        <authorList>
            <person name="Chen L.-Q."/>
            <person name="Hou B.-H."/>
            <person name="Lalonde S."/>
            <person name="Takanaga H."/>
            <person name="Hartung M.L."/>
            <person name="Qu X.-Q."/>
            <person name="Guo W.-J."/>
            <person name="Kim J.-G."/>
            <person name="Underwood W."/>
            <person name="Chaudhuri B."/>
            <person name="Chermak D."/>
            <person name="Antony G."/>
            <person name="White F.F."/>
            <person name="Somerville S.C."/>
            <person name="Mudgett M.B."/>
            <person name="Frommer W.B."/>
        </authorList>
    </citation>
    <scope>FUNCTION</scope>
    <scope>SUBCELLULAR LOCATION</scope>
    <scope>GENE FAMILY</scope>
    <scope>NOMENCLATURE</scope>
</reference>
<reference key="8">
    <citation type="journal article" date="2010" name="New Phytol.">
        <title>Promoter elements of rice susceptibility genes are bound and activated by specific TAL effectors from the bacterial blight pathogen, Xanthomonas oryzae pv. oryzae.</title>
        <authorList>
            <person name="Roemer P."/>
            <person name="Recht S."/>
            <person name="Strauss T."/>
            <person name="Elsaesser J."/>
            <person name="Schornack S."/>
            <person name="Boch J."/>
            <person name="Wang S."/>
            <person name="Lahaye T."/>
        </authorList>
    </citation>
    <scope>INDUCTION BY AVRXA7</scope>
    <source>
        <strain>cv. Indica / IR24</strain>
        <strain>cv. Indica / IRBB13</strain>
    </source>
</reference>
<reference key="9">
    <citation type="journal article" date="2012" name="Mol. Plant">
        <title>SWEET as sugar: new sucrose effluxers in plants.</title>
        <authorList>
            <person name="Baker R.F."/>
            <person name="Leach K.A."/>
            <person name="Braun D.M."/>
        </authorList>
    </citation>
    <scope>REVIEW</scope>
</reference>
<reference key="10">
    <citation type="journal article" date="2012" name="Science">
        <title>Sucrose efflux mediated by SWEET proteins as a key step for phloem transport.</title>
        <authorList>
            <person name="Chen L.-Q."/>
            <person name="Qu X.-Q."/>
            <person name="Hou B.-H."/>
            <person name="Sosso D."/>
            <person name="Osorio S."/>
            <person name="Fernie A.R."/>
            <person name="Frommer W.B."/>
        </authorList>
    </citation>
    <scope>FUNCTION</scope>
</reference>
<reference key="11">
    <citation type="journal article" date="2013" name="New Phytol.">
        <title>Five phylogenetically close rice SWEET genes confer TAL effector-mediated susceptibility to Xanthomonas oryzae pv. oryzae.</title>
        <authorList>
            <person name="Streubel J."/>
            <person name="Pesce C."/>
            <person name="Hutin M."/>
            <person name="Koebnik R."/>
            <person name="Boch J."/>
            <person name="Szurek B."/>
        </authorList>
    </citation>
    <scope>FUNCTION</scope>
    <scope>INDUCTION BY AVRXA7; PTHXO3 AND TAL5</scope>
    <source>
        <strain>cv. Nipponbare</strain>
    </source>
</reference>
<reference key="12">
    <citation type="journal article" date="2015" name="Curr. Opin. Plant Biol.">
        <title>SWEETs, transporters for intracellular and intercellular sugar translocation.</title>
        <authorList>
            <person name="Eom J.-S."/>
            <person name="Chen L.-Q."/>
            <person name="Sosso D."/>
            <person name="Julius B.T."/>
            <person name="Lin I.W."/>
            <person name="Qu X.-Q."/>
            <person name="Braun D.M."/>
            <person name="Frommer W.B."/>
        </authorList>
    </citation>
    <scope>REVIEW</scope>
</reference>
<gene>
    <name type="primary">SWEET14</name>
    <name type="synonym">Os11N3</name>
    <name type="ordered locus">Os11g0508600</name>
    <name type="ordered locus">LOC_Os11g31190</name>
    <name type="ORF">OsJ_34008</name>
</gene>
<sequence length="303" mass="32701">MAGMSLQHPWAFAFGLLGNIISFMTYLAPLPTFYRIYKSKSTQGFQSVPYVVALFSAMLWIYYALLKSDECLLITINSAGCVIETIYIAVYLVYAPKKAKMFTAKLLLLVNVGVFGLILLLTLLLSAGDRRIVVLGWVCVGFSVSVFVAPLSIIRLVVRTKSVEFMPFSLSFSLTISAVVWFLYGLLIKDKYVALPNVLGFSFGVIQMGLYAMYRNSTPKAVLTKEVEAATATGDDDHSAAGVKEHVVNIAKLSAAVDVVKTREVHPVDVESPPAEAPPEEDDKAAAATAAAVAGAGEKKVAA</sequence>
<name>SWT14_ORYSJ</name>
<accession>Q2R3P9</accession>
<accession>A0A0P0Y2E6</accession>
<proteinExistence type="evidence at transcript level"/>
<dbReference type="EMBL" id="DP000010">
    <property type="protein sequence ID" value="ABA93969.1"/>
    <property type="molecule type" value="Genomic_DNA"/>
</dbReference>
<dbReference type="EMBL" id="AP008217">
    <property type="protein sequence ID" value="BAF28318.1"/>
    <property type="molecule type" value="Genomic_DNA"/>
</dbReference>
<dbReference type="EMBL" id="AP014967">
    <property type="protein sequence ID" value="BAT14161.1"/>
    <property type="molecule type" value="Genomic_DNA"/>
</dbReference>
<dbReference type="EMBL" id="CM000148">
    <property type="protein sequence ID" value="EAZ18482.1"/>
    <property type="molecule type" value="Genomic_DNA"/>
</dbReference>
<dbReference type="EMBL" id="AK101913">
    <property type="protein sequence ID" value="BAG95290.1"/>
    <property type="molecule type" value="mRNA"/>
</dbReference>
<dbReference type="RefSeq" id="XP_015615538.1">
    <property type="nucleotide sequence ID" value="XM_015760052.1"/>
</dbReference>
<dbReference type="SMR" id="Q2R3P9"/>
<dbReference type="FunCoup" id="Q2R3P9">
    <property type="interactions" value="460"/>
</dbReference>
<dbReference type="STRING" id="39947.Q2R3P9"/>
<dbReference type="PaxDb" id="39947-Q2R3P9"/>
<dbReference type="EnsemblPlants" id="Os11t0508600-01">
    <property type="protein sequence ID" value="Os11t0508600-01"/>
    <property type="gene ID" value="Os11g0508600"/>
</dbReference>
<dbReference type="Gramene" id="Os11t0508600-01">
    <property type="protein sequence ID" value="Os11t0508600-01"/>
    <property type="gene ID" value="Os11g0508600"/>
</dbReference>
<dbReference type="KEGG" id="dosa:Os11g0508600"/>
<dbReference type="eggNOG" id="KOG1623">
    <property type="taxonomic scope" value="Eukaryota"/>
</dbReference>
<dbReference type="HOGENOM" id="CLU_048643_4_0_1"/>
<dbReference type="InParanoid" id="Q2R3P9"/>
<dbReference type="OMA" id="NCYLLCW"/>
<dbReference type="OrthoDB" id="409725at2759"/>
<dbReference type="Proteomes" id="UP000000763">
    <property type="component" value="Chromosome 11"/>
</dbReference>
<dbReference type="Proteomes" id="UP000007752">
    <property type="component" value="Chromosome 11"/>
</dbReference>
<dbReference type="Proteomes" id="UP000059680">
    <property type="component" value="Chromosome 11"/>
</dbReference>
<dbReference type="GO" id="GO:0016020">
    <property type="term" value="C:membrane"/>
    <property type="evidence" value="ECO:0000318"/>
    <property type="project" value="GO_Central"/>
</dbReference>
<dbReference type="GO" id="GO:0005886">
    <property type="term" value="C:plasma membrane"/>
    <property type="evidence" value="ECO:0000250"/>
    <property type="project" value="UniProtKB"/>
</dbReference>
<dbReference type="GO" id="GO:0008515">
    <property type="term" value="F:sucrose transmembrane transporter activity"/>
    <property type="evidence" value="ECO:0000314"/>
    <property type="project" value="UniProtKB"/>
</dbReference>
<dbReference type="GO" id="GO:0051119">
    <property type="term" value="F:sugar transmembrane transporter activity"/>
    <property type="evidence" value="ECO:0000250"/>
    <property type="project" value="UniProtKB"/>
</dbReference>
<dbReference type="GO" id="GO:0008643">
    <property type="term" value="P:carbohydrate transport"/>
    <property type="evidence" value="ECO:0000318"/>
    <property type="project" value="GO_Central"/>
</dbReference>
<dbReference type="GO" id="GO:0015770">
    <property type="term" value="P:sucrose transport"/>
    <property type="evidence" value="ECO:0000314"/>
    <property type="project" value="UniProtKB"/>
</dbReference>
<dbReference type="FunFam" id="1.20.1280.290:FF:000001">
    <property type="entry name" value="Bidirectional sugar transporter SWEET"/>
    <property type="match status" value="1"/>
</dbReference>
<dbReference type="FunFam" id="1.20.1280.290:FF:000003">
    <property type="entry name" value="Bidirectional sugar transporter SWEET"/>
    <property type="match status" value="1"/>
</dbReference>
<dbReference type="Gene3D" id="1.20.1280.290">
    <property type="match status" value="2"/>
</dbReference>
<dbReference type="InterPro" id="IPR047664">
    <property type="entry name" value="SWEET"/>
</dbReference>
<dbReference type="InterPro" id="IPR004316">
    <property type="entry name" value="SWEET_rpt"/>
</dbReference>
<dbReference type="PANTHER" id="PTHR10791:SF223">
    <property type="entry name" value="BIDIRECTIONAL SUGAR TRANSPORTER SWEET14"/>
    <property type="match status" value="1"/>
</dbReference>
<dbReference type="PANTHER" id="PTHR10791">
    <property type="entry name" value="RAG1-ACTIVATING PROTEIN 1"/>
    <property type="match status" value="1"/>
</dbReference>
<dbReference type="Pfam" id="PF03083">
    <property type="entry name" value="MtN3_slv"/>
    <property type="match status" value="2"/>
</dbReference>
<organism>
    <name type="scientific">Oryza sativa subsp. japonica</name>
    <name type="common">Rice</name>
    <dbReference type="NCBI Taxonomy" id="39947"/>
    <lineage>
        <taxon>Eukaryota</taxon>
        <taxon>Viridiplantae</taxon>
        <taxon>Streptophyta</taxon>
        <taxon>Embryophyta</taxon>
        <taxon>Tracheophyta</taxon>
        <taxon>Spermatophyta</taxon>
        <taxon>Magnoliopsida</taxon>
        <taxon>Liliopsida</taxon>
        <taxon>Poales</taxon>
        <taxon>Poaceae</taxon>
        <taxon>BOP clade</taxon>
        <taxon>Oryzoideae</taxon>
        <taxon>Oryzeae</taxon>
        <taxon>Oryzinae</taxon>
        <taxon>Oryza</taxon>
        <taxon>Oryza sativa</taxon>
    </lineage>
</organism>
<feature type="chain" id="PRO_0000404136" description="Bidirectional sugar transporter SWEET14">
    <location>
        <begin position="1"/>
        <end position="303"/>
    </location>
</feature>
<feature type="topological domain" description="Extracellular" evidence="2">
    <location>
        <begin position="1"/>
        <end position="9"/>
    </location>
</feature>
<feature type="transmembrane region" description="Helical; Name=1" evidence="2">
    <location>
        <begin position="10"/>
        <end position="30"/>
    </location>
</feature>
<feature type="topological domain" description="Cytoplasmic" evidence="2">
    <location>
        <begin position="31"/>
        <end position="44"/>
    </location>
</feature>
<feature type="transmembrane region" description="Helical; Name=2" evidence="2">
    <location>
        <begin position="45"/>
        <end position="65"/>
    </location>
</feature>
<feature type="topological domain" description="Extracellular" evidence="2">
    <location>
        <begin position="66"/>
        <end position="72"/>
    </location>
</feature>
<feature type="transmembrane region" description="Helical; Name=3" evidence="2">
    <location>
        <begin position="73"/>
        <end position="93"/>
    </location>
</feature>
<feature type="topological domain" description="Cytoplasmic" evidence="2">
    <location>
        <begin position="94"/>
        <end position="105"/>
    </location>
</feature>
<feature type="transmembrane region" description="Helical; Name=4" evidence="2">
    <location>
        <begin position="106"/>
        <end position="126"/>
    </location>
</feature>
<feature type="topological domain" description="Extracellular" evidence="2">
    <location>
        <begin position="127"/>
        <end position="133"/>
    </location>
</feature>
<feature type="transmembrane region" description="Helical; Name=5" evidence="2">
    <location>
        <begin position="134"/>
        <end position="154"/>
    </location>
</feature>
<feature type="topological domain" description="Cytoplasmic" evidence="2">
    <location>
        <begin position="155"/>
        <end position="167"/>
    </location>
</feature>
<feature type="transmembrane region" description="Helical; Name=6" evidence="2">
    <location>
        <begin position="168"/>
        <end position="188"/>
    </location>
</feature>
<feature type="topological domain" description="Extracellular" evidence="2">
    <location>
        <begin position="189"/>
        <end position="192"/>
    </location>
</feature>
<feature type="transmembrane region" description="Helical; Name=7" evidence="2">
    <location>
        <begin position="193"/>
        <end position="213"/>
    </location>
</feature>
<feature type="topological domain" description="Cytoplasmic" evidence="2">
    <location>
        <begin position="214"/>
        <end position="303"/>
    </location>
</feature>
<feature type="domain" description="MtN3/slv 1">
    <location>
        <begin position="13"/>
        <end position="98"/>
    </location>
</feature>
<feature type="domain" description="MtN3/slv 2">
    <location>
        <begin position="134"/>
        <end position="217"/>
    </location>
</feature>
<feature type="region of interest" description="Disordered" evidence="3">
    <location>
        <begin position="266"/>
        <end position="290"/>
    </location>
</feature>
<evidence type="ECO:0000250" key="1">
    <source>
        <dbReference type="UniProtKB" id="Q8L9J7"/>
    </source>
</evidence>
<evidence type="ECO:0000255" key="2"/>
<evidence type="ECO:0000256" key="3">
    <source>
        <dbReference type="SAM" id="MobiDB-lite"/>
    </source>
</evidence>
<evidence type="ECO:0000269" key="4">
    <source>
    </source>
</evidence>
<evidence type="ECO:0000269" key="5">
    <source>
    </source>
</evidence>
<evidence type="ECO:0000269" key="6">
    <source>
    </source>
</evidence>
<evidence type="ECO:0000269" key="7">
    <source>
    </source>
</evidence>
<evidence type="ECO:0000303" key="8">
    <source>
    </source>
</evidence>
<evidence type="ECO:0000305" key="9"/>
<protein>
    <recommendedName>
        <fullName>Bidirectional sugar transporter SWEET14</fullName>
        <shortName>OsSWEET14</shortName>
    </recommendedName>
</protein>
<comment type="function">
    <text evidence="5 6">Mediates both low-affinity uptake and efflux of sugar across the plasma membrane.</text>
</comment>
<comment type="function">
    <text evidence="7 8">Confers blight susceptibility (PubMed:25988582). Confers TAL effector-mediated susceptibility to Xanthomonas oryzae pv. oryzae (PubMed:23879865).</text>
</comment>
<comment type="subunit">
    <text evidence="1">Forms homooligomers and/or heterooligomers.</text>
</comment>
<comment type="subcellular location">
    <subcellularLocation>
        <location evidence="5">Cell membrane</location>
        <topology evidence="5">Multi-pass membrane protein</topology>
    </subcellularLocation>
</comment>
<comment type="induction">
    <text evidence="4 7">By the X.oryzae pv. oryzae (Xoo) transcription activator-like effector (TALe) proteins AvrXa7, PthXo3 and Tal5.</text>
</comment>
<comment type="similarity">
    <text evidence="9">Belongs to the SWEET sugar transporter family.</text>
</comment>